<comment type="function">
    <text evidence="1">F(1)F(0) ATP synthase produces ATP from ADP in the presence of a proton or sodium gradient. F-type ATPases consist of two structural domains, F(1) containing the extramembraneous catalytic core and F(0) containing the membrane proton channel, linked together by a central stalk and a peripheral stalk. During catalysis, ATP synthesis in the catalytic domain of F(1) is coupled via a rotary mechanism of the central stalk subunits to proton translocation.</text>
</comment>
<comment type="function">
    <text evidence="1">This protein is part of the stalk that links CF(0) to CF(1). It either transmits conformational changes from CF(0) to CF(1) or is implicated in proton conduction.</text>
</comment>
<comment type="subunit">
    <text evidence="1">F-type ATPases have 2 components, F(1) - the catalytic core - and F(0) - the membrane proton channel. F(1) has five subunits: alpha(3), beta(3), gamma(1), delta(1), epsilon(1). F(0) has three main subunits: a(1), b(2) and c(10-14). The alpha and beta chains form an alternating ring which encloses part of the gamma chain. F(1) is attached to F(0) by a central stalk formed by the gamma and epsilon chains, while a peripheral stalk is formed by the delta and b chains.</text>
</comment>
<comment type="subcellular location">
    <subcellularLocation>
        <location evidence="1">Cell inner membrane</location>
        <topology evidence="1">Peripheral membrane protein</topology>
    </subcellularLocation>
</comment>
<comment type="similarity">
    <text evidence="1">Belongs to the ATPase delta chain family.</text>
</comment>
<sequence length="183" mass="19465">MAELATIARPYAEALFKATTGAGVDPVSAAAWLDELAAIADRPELRQLAGNPKVTADQVFALFTQVLKDAARAALPEMAGNFLRTVIANGRINVLTQVAQQFRALLNRRNGFSDAVVYSAFPMDSAALSEVGAALQKRFGRKLNLAVQQDPSLIGGIRVVVGDEVLDSSVKARLEQMKAALTA</sequence>
<feature type="chain" id="PRO_1000184826" description="ATP synthase subunit delta">
    <location>
        <begin position="1"/>
        <end position="183"/>
    </location>
</feature>
<proteinExistence type="inferred from homology"/>
<reference key="1">
    <citation type="submission" date="2006-12" db="EMBL/GenBank/DDBJ databases">
        <title>Complete sequence of chromosome 1 of Verminephrobacter eiseniae EF01-2.</title>
        <authorList>
            <person name="Copeland A."/>
            <person name="Lucas S."/>
            <person name="Lapidus A."/>
            <person name="Barry K."/>
            <person name="Detter J.C."/>
            <person name="Glavina del Rio T."/>
            <person name="Dalin E."/>
            <person name="Tice H."/>
            <person name="Pitluck S."/>
            <person name="Chertkov O."/>
            <person name="Brettin T."/>
            <person name="Bruce D."/>
            <person name="Han C."/>
            <person name="Tapia R."/>
            <person name="Gilna P."/>
            <person name="Schmutz J."/>
            <person name="Larimer F."/>
            <person name="Land M."/>
            <person name="Hauser L."/>
            <person name="Kyrpides N."/>
            <person name="Kim E."/>
            <person name="Stahl D."/>
            <person name="Richardson P."/>
        </authorList>
    </citation>
    <scope>NUCLEOTIDE SEQUENCE [LARGE SCALE GENOMIC DNA]</scope>
    <source>
        <strain>EF01-2</strain>
    </source>
</reference>
<keyword id="KW-0066">ATP synthesis</keyword>
<keyword id="KW-0997">Cell inner membrane</keyword>
<keyword id="KW-1003">Cell membrane</keyword>
<keyword id="KW-0139">CF(1)</keyword>
<keyword id="KW-0375">Hydrogen ion transport</keyword>
<keyword id="KW-0406">Ion transport</keyword>
<keyword id="KW-0472">Membrane</keyword>
<keyword id="KW-1185">Reference proteome</keyword>
<keyword id="KW-0813">Transport</keyword>
<accession>A1WF55</accession>
<name>ATPD_VEREI</name>
<organism>
    <name type="scientific">Verminephrobacter eiseniae (strain EF01-2)</name>
    <dbReference type="NCBI Taxonomy" id="391735"/>
    <lineage>
        <taxon>Bacteria</taxon>
        <taxon>Pseudomonadati</taxon>
        <taxon>Pseudomonadota</taxon>
        <taxon>Betaproteobacteria</taxon>
        <taxon>Burkholderiales</taxon>
        <taxon>Comamonadaceae</taxon>
        <taxon>Verminephrobacter</taxon>
    </lineage>
</organism>
<evidence type="ECO:0000255" key="1">
    <source>
        <dbReference type="HAMAP-Rule" id="MF_01416"/>
    </source>
</evidence>
<gene>
    <name evidence="1" type="primary">atpH</name>
    <name type="ordered locus">Veis_0477</name>
</gene>
<protein>
    <recommendedName>
        <fullName evidence="1">ATP synthase subunit delta</fullName>
    </recommendedName>
    <alternativeName>
        <fullName evidence="1">ATP synthase F(1) sector subunit delta</fullName>
    </alternativeName>
    <alternativeName>
        <fullName evidence="1">F-type ATPase subunit delta</fullName>
        <shortName evidence="1">F-ATPase subunit delta</shortName>
    </alternativeName>
</protein>
<dbReference type="EMBL" id="CP000542">
    <property type="protein sequence ID" value="ABM56262.1"/>
    <property type="molecule type" value="Genomic_DNA"/>
</dbReference>
<dbReference type="RefSeq" id="WP_011808278.1">
    <property type="nucleotide sequence ID" value="NC_008786.1"/>
</dbReference>
<dbReference type="SMR" id="A1WF55"/>
<dbReference type="STRING" id="391735.Veis_0477"/>
<dbReference type="GeneID" id="76459187"/>
<dbReference type="KEGG" id="vei:Veis_0477"/>
<dbReference type="eggNOG" id="COG0712">
    <property type="taxonomic scope" value="Bacteria"/>
</dbReference>
<dbReference type="HOGENOM" id="CLU_085114_3_0_4"/>
<dbReference type="OrthoDB" id="9816221at2"/>
<dbReference type="Proteomes" id="UP000000374">
    <property type="component" value="Chromosome"/>
</dbReference>
<dbReference type="GO" id="GO:0005886">
    <property type="term" value="C:plasma membrane"/>
    <property type="evidence" value="ECO:0007669"/>
    <property type="project" value="UniProtKB-SubCell"/>
</dbReference>
<dbReference type="GO" id="GO:0045259">
    <property type="term" value="C:proton-transporting ATP synthase complex"/>
    <property type="evidence" value="ECO:0007669"/>
    <property type="project" value="UniProtKB-KW"/>
</dbReference>
<dbReference type="GO" id="GO:0046933">
    <property type="term" value="F:proton-transporting ATP synthase activity, rotational mechanism"/>
    <property type="evidence" value="ECO:0007669"/>
    <property type="project" value="UniProtKB-UniRule"/>
</dbReference>
<dbReference type="Gene3D" id="1.10.520.20">
    <property type="entry name" value="N-terminal domain of the delta subunit of the F1F0-ATP synthase"/>
    <property type="match status" value="1"/>
</dbReference>
<dbReference type="HAMAP" id="MF_01416">
    <property type="entry name" value="ATP_synth_delta_bact"/>
    <property type="match status" value="1"/>
</dbReference>
<dbReference type="InterPro" id="IPR026015">
    <property type="entry name" value="ATP_synth_OSCP/delta_N_sf"/>
</dbReference>
<dbReference type="InterPro" id="IPR000711">
    <property type="entry name" value="ATPase_OSCP/dsu"/>
</dbReference>
<dbReference type="NCBIfam" id="TIGR01145">
    <property type="entry name" value="ATP_synt_delta"/>
    <property type="match status" value="1"/>
</dbReference>
<dbReference type="NCBIfam" id="NF004402">
    <property type="entry name" value="PRK05758.2-2"/>
    <property type="match status" value="1"/>
</dbReference>
<dbReference type="PANTHER" id="PTHR11910">
    <property type="entry name" value="ATP SYNTHASE DELTA CHAIN"/>
    <property type="match status" value="1"/>
</dbReference>
<dbReference type="Pfam" id="PF00213">
    <property type="entry name" value="OSCP"/>
    <property type="match status" value="1"/>
</dbReference>
<dbReference type="PRINTS" id="PR00125">
    <property type="entry name" value="ATPASEDELTA"/>
</dbReference>
<dbReference type="SUPFAM" id="SSF47928">
    <property type="entry name" value="N-terminal domain of the delta subunit of the F1F0-ATP synthase"/>
    <property type="match status" value="1"/>
</dbReference>